<gene>
    <name type="ordered locus">BQ2027_MB3374</name>
</gene>
<keyword id="KW-0489">Methyltransferase</keyword>
<keyword id="KW-1185">Reference proteome</keyword>
<keyword id="KW-0808">Transferase</keyword>
<name>Y3374_MYCBO</name>
<accession>P65349</accession>
<accession>A0A1R3Y3W0</accession>
<accession>O53392</accession>
<accession>X2BP79</accession>
<organism>
    <name type="scientific">Mycobacterium bovis (strain ATCC BAA-935 / AF2122/97)</name>
    <dbReference type="NCBI Taxonomy" id="233413"/>
    <lineage>
        <taxon>Bacteria</taxon>
        <taxon>Bacillati</taxon>
        <taxon>Actinomycetota</taxon>
        <taxon>Actinomycetes</taxon>
        <taxon>Mycobacteriales</taxon>
        <taxon>Mycobacteriaceae</taxon>
        <taxon>Mycobacterium</taxon>
        <taxon>Mycobacterium tuberculosis complex</taxon>
    </lineage>
</organism>
<proteinExistence type="inferred from homology"/>
<evidence type="ECO:0000305" key="1"/>
<reference key="1">
    <citation type="journal article" date="2003" name="Proc. Natl. Acad. Sci. U.S.A.">
        <title>The complete genome sequence of Mycobacterium bovis.</title>
        <authorList>
            <person name="Garnier T."/>
            <person name="Eiglmeier K."/>
            <person name="Camus J.-C."/>
            <person name="Medina N."/>
            <person name="Mansoor H."/>
            <person name="Pryor M."/>
            <person name="Duthoy S."/>
            <person name="Grondin S."/>
            <person name="Lacroix C."/>
            <person name="Monsempe C."/>
            <person name="Simon S."/>
            <person name="Harris B."/>
            <person name="Atkin R."/>
            <person name="Doggett J."/>
            <person name="Mayes R."/>
            <person name="Keating L."/>
            <person name="Wheeler P.R."/>
            <person name="Parkhill J."/>
            <person name="Barrell B.G."/>
            <person name="Cole S.T."/>
            <person name="Gordon S.V."/>
            <person name="Hewinson R.G."/>
        </authorList>
    </citation>
    <scope>NUCLEOTIDE SEQUENCE [LARGE SCALE GENOMIC DNA]</scope>
    <source>
        <strain>ATCC BAA-935 / AF2122/97</strain>
    </source>
</reference>
<reference key="2">
    <citation type="journal article" date="2017" name="Genome Announc.">
        <title>Updated reference genome sequence and annotation of Mycobacterium bovis AF2122/97.</title>
        <authorList>
            <person name="Malone K.M."/>
            <person name="Farrell D."/>
            <person name="Stuber T.P."/>
            <person name="Schubert O.T."/>
            <person name="Aebersold R."/>
            <person name="Robbe-Austerman S."/>
            <person name="Gordon S.V."/>
        </authorList>
    </citation>
    <scope>NUCLEOTIDE SEQUENCE [LARGE SCALE GENOMIC DNA]</scope>
    <scope>GENOME REANNOTATION</scope>
    <source>
        <strain>ATCC BAA-935 / AF2122/97</strain>
    </source>
</reference>
<comment type="similarity">
    <text evidence="1">Belongs to the methyltransferase superfamily.</text>
</comment>
<sequence>MTCSRRDMSLSFGSAVGAYERGRPSYPPEAIDWLLPAAARRVLDLGAGTGKLTTRLVERGLDVVAVDPIPEMLDVLRAALPQTVALLGTAEEIPLDDNSVDAVLVAQAWHWVDPARAIPEVARVLRPGGRLGLVWNTRDERLGWVRELGEIIGRDGDPVRDRVTLPEPFTTVQRHQVEWTNYLTPQALIDLVASRSYCITSPAQVRTKTLDRVRQLLATHPALANSNGLALPYVTVCVRATLA</sequence>
<protein>
    <recommendedName>
        <fullName>Uncharacterized methyltransferase Mb3374</fullName>
        <ecNumber>2.1.1.-</ecNumber>
    </recommendedName>
</protein>
<feature type="chain" id="PRO_0000204444" description="Uncharacterized methyltransferase Mb3374">
    <location>
        <begin position="1"/>
        <end position="243"/>
    </location>
</feature>
<dbReference type="EC" id="2.1.1.-"/>
<dbReference type="EMBL" id="LT708304">
    <property type="protein sequence ID" value="SIU02003.1"/>
    <property type="molecule type" value="Genomic_DNA"/>
</dbReference>
<dbReference type="RefSeq" id="NP_857019.1">
    <property type="nucleotide sequence ID" value="NC_002945.3"/>
</dbReference>
<dbReference type="RefSeq" id="WP_003417461.1">
    <property type="nucleotide sequence ID" value="NC_002945.4"/>
</dbReference>
<dbReference type="SMR" id="P65349"/>
<dbReference type="KEGG" id="mbo:BQ2027_MB3374"/>
<dbReference type="PATRIC" id="fig|233413.5.peg.3707"/>
<dbReference type="Proteomes" id="UP000001419">
    <property type="component" value="Chromosome"/>
</dbReference>
<dbReference type="GO" id="GO:0008757">
    <property type="term" value="F:S-adenosylmethionine-dependent methyltransferase activity"/>
    <property type="evidence" value="ECO:0007669"/>
    <property type="project" value="InterPro"/>
</dbReference>
<dbReference type="GO" id="GO:0032259">
    <property type="term" value="P:methylation"/>
    <property type="evidence" value="ECO:0007669"/>
    <property type="project" value="UniProtKB-KW"/>
</dbReference>
<dbReference type="CDD" id="cd02440">
    <property type="entry name" value="AdoMet_MTases"/>
    <property type="match status" value="1"/>
</dbReference>
<dbReference type="Gene3D" id="3.40.50.150">
    <property type="entry name" value="Vaccinia Virus protein VP39"/>
    <property type="match status" value="1"/>
</dbReference>
<dbReference type="InterPro" id="IPR051052">
    <property type="entry name" value="Diverse_substrate_MTase"/>
</dbReference>
<dbReference type="InterPro" id="IPR013216">
    <property type="entry name" value="Methyltransf_11"/>
</dbReference>
<dbReference type="InterPro" id="IPR029063">
    <property type="entry name" value="SAM-dependent_MTases_sf"/>
</dbReference>
<dbReference type="PANTHER" id="PTHR44942">
    <property type="entry name" value="METHYLTRANSF_11 DOMAIN-CONTAINING PROTEIN"/>
    <property type="match status" value="1"/>
</dbReference>
<dbReference type="PANTHER" id="PTHR44942:SF4">
    <property type="entry name" value="METHYLTRANSFERASE TYPE 11 DOMAIN-CONTAINING PROTEIN"/>
    <property type="match status" value="1"/>
</dbReference>
<dbReference type="Pfam" id="PF08241">
    <property type="entry name" value="Methyltransf_11"/>
    <property type="match status" value="1"/>
</dbReference>
<dbReference type="SUPFAM" id="SSF53335">
    <property type="entry name" value="S-adenosyl-L-methionine-dependent methyltransferases"/>
    <property type="match status" value="1"/>
</dbReference>